<reference key="1">
    <citation type="submission" date="2006-12" db="EMBL/GenBank/DDBJ databases">
        <authorList>
            <person name="Fouts D.E."/>
            <person name="Nelson K.E."/>
            <person name="Sebastian Y."/>
        </authorList>
    </citation>
    <scope>NUCLEOTIDE SEQUENCE [LARGE SCALE GENOMIC DNA]</scope>
    <source>
        <strain>81-176</strain>
    </source>
</reference>
<sequence>MEKYNREEFEEVIVDIGRVTKVVKGGRRFRFTALVIVGNRKGLVGVGYGKAKEVPDAIRKAVDDAFKNIVEVKTKGSTIAHDVEVKYNASRILLKPASEGTGVIAGGSTRPIVELAGIKDILTKSLGSNNSANVVRATIKALTMLKG</sequence>
<evidence type="ECO:0000255" key="1">
    <source>
        <dbReference type="HAMAP-Rule" id="MF_01307"/>
    </source>
</evidence>
<evidence type="ECO:0000305" key="2"/>
<organism>
    <name type="scientific">Campylobacter jejuni subsp. jejuni serotype O:23/36 (strain 81-176)</name>
    <dbReference type="NCBI Taxonomy" id="354242"/>
    <lineage>
        <taxon>Bacteria</taxon>
        <taxon>Pseudomonadati</taxon>
        <taxon>Campylobacterota</taxon>
        <taxon>Epsilonproteobacteria</taxon>
        <taxon>Campylobacterales</taxon>
        <taxon>Campylobacteraceae</taxon>
        <taxon>Campylobacter</taxon>
    </lineage>
</organism>
<gene>
    <name evidence="1" type="primary">rpsE</name>
    <name type="ordered locus">CJJ81176_1687</name>
</gene>
<protein>
    <recommendedName>
        <fullName evidence="1">Small ribosomal subunit protein uS5</fullName>
    </recommendedName>
    <alternativeName>
        <fullName evidence="2">30S ribosomal protein S5</fullName>
    </alternativeName>
</protein>
<feature type="chain" id="PRO_0000323101" description="Small ribosomal subunit protein uS5">
    <location>
        <begin position="1"/>
        <end position="147"/>
    </location>
</feature>
<feature type="domain" description="S5 DRBM" evidence="1">
    <location>
        <begin position="9"/>
        <end position="72"/>
    </location>
</feature>
<dbReference type="EMBL" id="CP000538">
    <property type="protein sequence ID" value="EAQ72531.1"/>
    <property type="molecule type" value="Genomic_DNA"/>
</dbReference>
<dbReference type="RefSeq" id="WP_002779428.1">
    <property type="nucleotide sequence ID" value="NC_008787.1"/>
</dbReference>
<dbReference type="SMR" id="A1W1U3"/>
<dbReference type="GeneID" id="98395681"/>
<dbReference type="KEGG" id="cjj:CJJ81176_1687"/>
<dbReference type="eggNOG" id="COG0098">
    <property type="taxonomic scope" value="Bacteria"/>
</dbReference>
<dbReference type="HOGENOM" id="CLU_065898_2_2_7"/>
<dbReference type="Proteomes" id="UP000000646">
    <property type="component" value="Chromosome"/>
</dbReference>
<dbReference type="GO" id="GO:0015935">
    <property type="term" value="C:small ribosomal subunit"/>
    <property type="evidence" value="ECO:0007669"/>
    <property type="project" value="InterPro"/>
</dbReference>
<dbReference type="GO" id="GO:0019843">
    <property type="term" value="F:rRNA binding"/>
    <property type="evidence" value="ECO:0007669"/>
    <property type="project" value="UniProtKB-UniRule"/>
</dbReference>
<dbReference type="GO" id="GO:0003735">
    <property type="term" value="F:structural constituent of ribosome"/>
    <property type="evidence" value="ECO:0007669"/>
    <property type="project" value="InterPro"/>
</dbReference>
<dbReference type="GO" id="GO:0006412">
    <property type="term" value="P:translation"/>
    <property type="evidence" value="ECO:0007669"/>
    <property type="project" value="UniProtKB-UniRule"/>
</dbReference>
<dbReference type="FunFam" id="3.30.160.20:FF:000001">
    <property type="entry name" value="30S ribosomal protein S5"/>
    <property type="match status" value="1"/>
</dbReference>
<dbReference type="FunFam" id="3.30.230.10:FF:000024">
    <property type="entry name" value="30S ribosomal protein S5"/>
    <property type="match status" value="1"/>
</dbReference>
<dbReference type="Gene3D" id="3.30.160.20">
    <property type="match status" value="1"/>
</dbReference>
<dbReference type="Gene3D" id="3.30.230.10">
    <property type="match status" value="1"/>
</dbReference>
<dbReference type="HAMAP" id="MF_01307_B">
    <property type="entry name" value="Ribosomal_uS5_B"/>
    <property type="match status" value="1"/>
</dbReference>
<dbReference type="InterPro" id="IPR020568">
    <property type="entry name" value="Ribosomal_Su5_D2-typ_SF"/>
</dbReference>
<dbReference type="InterPro" id="IPR000851">
    <property type="entry name" value="Ribosomal_uS5"/>
</dbReference>
<dbReference type="InterPro" id="IPR005712">
    <property type="entry name" value="Ribosomal_uS5_bac-type"/>
</dbReference>
<dbReference type="InterPro" id="IPR005324">
    <property type="entry name" value="Ribosomal_uS5_C"/>
</dbReference>
<dbReference type="InterPro" id="IPR013810">
    <property type="entry name" value="Ribosomal_uS5_N"/>
</dbReference>
<dbReference type="InterPro" id="IPR018192">
    <property type="entry name" value="Ribosomal_uS5_N_CS"/>
</dbReference>
<dbReference type="InterPro" id="IPR014721">
    <property type="entry name" value="Ribsml_uS5_D2-typ_fold_subgr"/>
</dbReference>
<dbReference type="NCBIfam" id="TIGR01021">
    <property type="entry name" value="rpsE_bact"/>
    <property type="match status" value="1"/>
</dbReference>
<dbReference type="PANTHER" id="PTHR48277">
    <property type="entry name" value="MITOCHONDRIAL RIBOSOMAL PROTEIN S5"/>
    <property type="match status" value="1"/>
</dbReference>
<dbReference type="PANTHER" id="PTHR48277:SF1">
    <property type="entry name" value="MITOCHONDRIAL RIBOSOMAL PROTEIN S5"/>
    <property type="match status" value="1"/>
</dbReference>
<dbReference type="Pfam" id="PF00333">
    <property type="entry name" value="Ribosomal_S5"/>
    <property type="match status" value="1"/>
</dbReference>
<dbReference type="Pfam" id="PF03719">
    <property type="entry name" value="Ribosomal_S5_C"/>
    <property type="match status" value="1"/>
</dbReference>
<dbReference type="SUPFAM" id="SSF54768">
    <property type="entry name" value="dsRNA-binding domain-like"/>
    <property type="match status" value="1"/>
</dbReference>
<dbReference type="SUPFAM" id="SSF54211">
    <property type="entry name" value="Ribosomal protein S5 domain 2-like"/>
    <property type="match status" value="1"/>
</dbReference>
<dbReference type="PROSITE" id="PS00585">
    <property type="entry name" value="RIBOSOMAL_S5"/>
    <property type="match status" value="1"/>
</dbReference>
<dbReference type="PROSITE" id="PS50881">
    <property type="entry name" value="S5_DSRBD"/>
    <property type="match status" value="1"/>
</dbReference>
<accession>A1W1U3</accession>
<proteinExistence type="inferred from homology"/>
<keyword id="KW-0687">Ribonucleoprotein</keyword>
<keyword id="KW-0689">Ribosomal protein</keyword>
<keyword id="KW-0694">RNA-binding</keyword>
<keyword id="KW-0699">rRNA-binding</keyword>
<name>RS5_CAMJJ</name>
<comment type="function">
    <text evidence="1">With S4 and S12 plays an important role in translational accuracy.</text>
</comment>
<comment type="function">
    <text evidence="1">Located at the back of the 30S subunit body where it stabilizes the conformation of the head with respect to the body.</text>
</comment>
<comment type="subunit">
    <text evidence="1">Part of the 30S ribosomal subunit. Contacts proteins S4 and S8.</text>
</comment>
<comment type="domain">
    <text>The N-terminal domain interacts with the head of the 30S subunit; the C-terminal domain interacts with the body and contacts protein S4. The interaction surface between S4 and S5 is involved in control of translational fidelity.</text>
</comment>
<comment type="similarity">
    <text evidence="1">Belongs to the universal ribosomal protein uS5 family.</text>
</comment>